<dbReference type="EC" id="2.3.1.35" evidence="1"/>
<dbReference type="EC" id="2.3.1.1" evidence="1"/>
<dbReference type="EMBL" id="KN294014">
    <property type="protein sequence ID" value="EEH36909.1"/>
    <property type="molecule type" value="Genomic_DNA"/>
</dbReference>
<dbReference type="RefSeq" id="XP_002790790.1">
    <property type="nucleotide sequence ID" value="XM_002790744.2"/>
</dbReference>
<dbReference type="SMR" id="C1H986"/>
<dbReference type="STRING" id="502779.C1H986"/>
<dbReference type="MEROPS" id="T05.001"/>
<dbReference type="GeneID" id="9094040"/>
<dbReference type="KEGG" id="pbl:PAAG_07327"/>
<dbReference type="VEuPathDB" id="FungiDB:PAAG_07327"/>
<dbReference type="eggNOG" id="KOG2786">
    <property type="taxonomic scope" value="Eukaryota"/>
</dbReference>
<dbReference type="HOGENOM" id="CLU_027172_1_0_1"/>
<dbReference type="OMA" id="WGRIVMA"/>
<dbReference type="OrthoDB" id="2017946at2759"/>
<dbReference type="UniPathway" id="UPA00068">
    <property type="reaction ID" value="UER00106"/>
</dbReference>
<dbReference type="UniPathway" id="UPA00068">
    <property type="reaction ID" value="UER00111"/>
</dbReference>
<dbReference type="Proteomes" id="UP000002059">
    <property type="component" value="Partially assembled WGS sequence"/>
</dbReference>
<dbReference type="GO" id="GO:0005759">
    <property type="term" value="C:mitochondrial matrix"/>
    <property type="evidence" value="ECO:0007669"/>
    <property type="project" value="UniProtKB-SubCell"/>
</dbReference>
<dbReference type="GO" id="GO:0004358">
    <property type="term" value="F:glutamate N-acetyltransferase activity"/>
    <property type="evidence" value="ECO:0007669"/>
    <property type="project" value="UniProtKB-UniRule"/>
</dbReference>
<dbReference type="GO" id="GO:0004042">
    <property type="term" value="F:L-glutamate N-acetyltransferase activity"/>
    <property type="evidence" value="ECO:0007669"/>
    <property type="project" value="UniProtKB-UniRule"/>
</dbReference>
<dbReference type="GO" id="GO:0006526">
    <property type="term" value="P:L-arginine biosynthetic process"/>
    <property type="evidence" value="ECO:0007669"/>
    <property type="project" value="UniProtKB-UniRule"/>
</dbReference>
<dbReference type="GO" id="GO:0006592">
    <property type="term" value="P:ornithine biosynthetic process"/>
    <property type="evidence" value="ECO:0007669"/>
    <property type="project" value="TreeGrafter"/>
</dbReference>
<dbReference type="CDD" id="cd02152">
    <property type="entry name" value="OAT"/>
    <property type="match status" value="1"/>
</dbReference>
<dbReference type="FunFam" id="3.60.70.12:FF:000001">
    <property type="entry name" value="Arginine biosynthesis bifunctional protein ArgJ, chloroplastic"/>
    <property type="match status" value="1"/>
</dbReference>
<dbReference type="FunFam" id="3.10.20.340:FF:000002">
    <property type="entry name" value="Arginine biosynthesis bifunctional protein ArgJ, mitochondrial"/>
    <property type="match status" value="1"/>
</dbReference>
<dbReference type="FunFam" id="3.30.2330.10:FF:000001">
    <property type="entry name" value="Arginine biosynthesis bifunctional protein ArgJ, mitochondrial"/>
    <property type="match status" value="1"/>
</dbReference>
<dbReference type="Gene3D" id="3.30.2330.10">
    <property type="entry name" value="arginine biosynthesis bifunctional protein suprefamily"/>
    <property type="match status" value="1"/>
</dbReference>
<dbReference type="Gene3D" id="3.10.20.340">
    <property type="entry name" value="ArgJ beta chain, C-terminal domain"/>
    <property type="match status" value="1"/>
</dbReference>
<dbReference type="Gene3D" id="3.60.70.12">
    <property type="entry name" value="L-amino peptidase D-ALA esterase/amidase"/>
    <property type="match status" value="1"/>
</dbReference>
<dbReference type="HAMAP" id="MF_01106">
    <property type="entry name" value="ArgJ"/>
    <property type="match status" value="1"/>
</dbReference>
<dbReference type="InterPro" id="IPR002813">
    <property type="entry name" value="Arg_biosynth_ArgJ"/>
</dbReference>
<dbReference type="InterPro" id="IPR016117">
    <property type="entry name" value="ArgJ-like_dom_sf"/>
</dbReference>
<dbReference type="InterPro" id="IPR042195">
    <property type="entry name" value="ArgJ_beta_C"/>
</dbReference>
<dbReference type="NCBIfam" id="TIGR00120">
    <property type="entry name" value="ArgJ"/>
    <property type="match status" value="1"/>
</dbReference>
<dbReference type="NCBIfam" id="NF003802">
    <property type="entry name" value="PRK05388.1"/>
    <property type="match status" value="1"/>
</dbReference>
<dbReference type="PANTHER" id="PTHR23100">
    <property type="entry name" value="ARGININE BIOSYNTHESIS BIFUNCTIONAL PROTEIN ARGJ"/>
    <property type="match status" value="1"/>
</dbReference>
<dbReference type="PANTHER" id="PTHR23100:SF0">
    <property type="entry name" value="ARGININE BIOSYNTHESIS BIFUNCTIONAL PROTEIN ARGJ, MITOCHONDRIAL"/>
    <property type="match status" value="1"/>
</dbReference>
<dbReference type="Pfam" id="PF01960">
    <property type="entry name" value="ArgJ"/>
    <property type="match status" value="1"/>
</dbReference>
<dbReference type="SUPFAM" id="SSF56266">
    <property type="entry name" value="DmpA/ArgJ-like"/>
    <property type="match status" value="1"/>
</dbReference>
<accession>C1H986</accession>
<feature type="chain" id="PRO_0000398074" description="Arginine biosynthesis bifunctional protein ArgJ alpha chain" evidence="1">
    <location>
        <begin position="1"/>
        <end position="240"/>
    </location>
</feature>
<feature type="chain" id="PRO_0000398075" description="Arginine biosynthesis bifunctional protein ArgJ beta chain" evidence="1">
    <location>
        <begin position="241"/>
        <end position="473"/>
    </location>
</feature>
<feature type="active site" description="Nucleophile" evidence="1">
    <location>
        <position position="241"/>
    </location>
</feature>
<feature type="binding site" evidence="1">
    <location>
        <position position="201"/>
    </location>
    <ligand>
        <name>substrate</name>
    </ligand>
</feature>
<feature type="binding site" evidence="1">
    <location>
        <position position="230"/>
    </location>
    <ligand>
        <name>substrate</name>
    </ligand>
</feature>
<feature type="binding site" evidence="1">
    <location>
        <position position="241"/>
    </location>
    <ligand>
        <name>substrate</name>
    </ligand>
</feature>
<feature type="binding site" evidence="1">
    <location>
        <position position="328"/>
    </location>
    <ligand>
        <name>substrate</name>
    </ligand>
</feature>
<feature type="binding site" evidence="1">
    <location>
        <position position="468"/>
    </location>
    <ligand>
        <name>substrate</name>
    </ligand>
</feature>
<feature type="binding site" evidence="1">
    <location>
        <position position="473"/>
    </location>
    <ligand>
        <name>substrate</name>
    </ligand>
</feature>
<feature type="site" description="Involved in the stabilization of negative charge on the oxyanion by the formation of the oxyanion hole" evidence="1">
    <location>
        <position position="162"/>
    </location>
</feature>
<feature type="site" description="Involved in the stabilization of negative charge on the oxyanion by the formation of the oxyanion hole" evidence="1">
    <location>
        <position position="163"/>
    </location>
</feature>
<feature type="site" description="Cleavage; by autolysis" evidence="1">
    <location>
        <begin position="240"/>
        <end position="241"/>
    </location>
</feature>
<protein>
    <recommendedName>
        <fullName evidence="1">Arginine biosynthesis bifunctional protein ArgJ, mitochondrial</fullName>
    </recommendedName>
    <domain>
        <recommendedName>
            <fullName evidence="1">Glutamate N-acetyltransferase</fullName>
            <shortName evidence="1">GAT</shortName>
            <ecNumber evidence="1">2.3.1.35</ecNumber>
        </recommendedName>
        <alternativeName>
            <fullName evidence="1">Ornithine acetyltransferase</fullName>
            <shortName evidence="1">OATase</shortName>
        </alternativeName>
        <alternativeName>
            <fullName evidence="1">Ornithine transacetylase</fullName>
        </alternativeName>
    </domain>
    <domain>
        <recommendedName>
            <fullName evidence="1">Amino-acid acetyltransferase</fullName>
            <ecNumber evidence="1">2.3.1.1</ecNumber>
        </recommendedName>
        <alternativeName>
            <fullName evidence="1">N-acetylglutamate synthase</fullName>
            <shortName evidence="1">AGS</shortName>
        </alternativeName>
    </domain>
    <component>
        <recommendedName>
            <fullName evidence="1">Arginine biosynthesis bifunctional protein ArgJ alpha chain</fullName>
        </recommendedName>
    </component>
    <component>
        <recommendedName>
            <fullName evidence="1">Arginine biosynthesis bifunctional protein ArgJ beta chain</fullName>
        </recommendedName>
    </component>
</protein>
<gene>
    <name type="ORF">PAAG_07327</name>
</gene>
<name>ARGJ_PARBA</name>
<sequence>MKTQQSFHVVAGFVCFPMSKTSQSRCYSTLRDFLIPPSKQKFVPSSGTYPKGFLAAGAHAGVKESNTQFRDVALICSKTPCSAAAVFTTNKFQAAPVQVSKQVLEAREGADITGVVINSGCANAVTGKGGLEDAKSMSAKVDECNGTPSTSSKGPSTLVMSTGVIGRRLPIKRILNAIPVAHSNLSSTHKAWLNAARSICTTDTFPKLLSRTFTLPSSPNHTYRIAGMTKGAGMIHPNMATLLGILCTDVPISPAALKPLLSHAVSRSFNCISIDGDTSTNDTVALLANGAAGGQTITTPSSPNYAAMQTVLTSFAQSLAQLVVRDGEGATKFVTVRVLNSPSQADARAIASTIARSPLVKTALYGRDANWGRILCAIGYTQGIQVGTVVPERTSVSFKPVDGSEELKLLVNGEPQMVNEERAARILQDEDLEIVVDLGGGEKGGEGMAGEEGIYWFCDFSHEYVTINADYRT</sequence>
<reference key="1">
    <citation type="journal article" date="2011" name="PLoS Genet.">
        <title>Comparative genomic analysis of human fungal pathogens causing paracoccidioidomycosis.</title>
        <authorList>
            <person name="Desjardins C.A."/>
            <person name="Champion M.D."/>
            <person name="Holder J.W."/>
            <person name="Muszewska A."/>
            <person name="Goldberg J."/>
            <person name="Bailao A.M."/>
            <person name="Brigido M.M."/>
            <person name="Ferreira M.E."/>
            <person name="Garcia A.M."/>
            <person name="Grynberg M."/>
            <person name="Gujja S."/>
            <person name="Heiman D.I."/>
            <person name="Henn M.R."/>
            <person name="Kodira C.D."/>
            <person name="Leon-Narvaez H."/>
            <person name="Longo L.V.G."/>
            <person name="Ma L.-J."/>
            <person name="Malavazi I."/>
            <person name="Matsuo A.L."/>
            <person name="Morais F.V."/>
            <person name="Pereira M."/>
            <person name="Rodriguez-Brito S."/>
            <person name="Sakthikumar S."/>
            <person name="Salem-Izacc S.M."/>
            <person name="Sykes S.M."/>
            <person name="Teixeira M.M."/>
            <person name="Vallejo M.C."/>
            <person name="Walter M.E."/>
            <person name="Yandava C."/>
            <person name="Young S."/>
            <person name="Zeng Q."/>
            <person name="Zucker J."/>
            <person name="Felipe M.S."/>
            <person name="Goldman G.H."/>
            <person name="Haas B.J."/>
            <person name="McEwen J.G."/>
            <person name="Nino-Vega G."/>
            <person name="Puccia R."/>
            <person name="San-Blas G."/>
            <person name="Soares C.M."/>
            <person name="Birren B.W."/>
            <person name="Cuomo C.A."/>
        </authorList>
    </citation>
    <scope>NUCLEOTIDE SEQUENCE [LARGE SCALE GENOMIC DNA]</scope>
    <source>
        <strain>ATCC MYA-826 / Pb01</strain>
    </source>
</reference>
<keyword id="KW-0012">Acyltransferase</keyword>
<keyword id="KW-0028">Amino-acid biosynthesis</keyword>
<keyword id="KW-0055">Arginine biosynthesis</keyword>
<keyword id="KW-0068">Autocatalytic cleavage</keyword>
<keyword id="KW-0496">Mitochondrion</keyword>
<keyword id="KW-0511">Multifunctional enzyme</keyword>
<keyword id="KW-1185">Reference proteome</keyword>
<keyword id="KW-0808">Transferase</keyword>
<comment type="function">
    <text evidence="1">Catalyzes two activities which are involved in the cyclic version of arginine biosynthesis: the synthesis of acetylglutamate from glutamate and acetyl-CoA, and of ornithine by transacetylation between acetylornithine and glutamate.</text>
</comment>
<comment type="catalytic activity">
    <reaction evidence="1">
        <text>N(2)-acetyl-L-ornithine + L-glutamate = N-acetyl-L-glutamate + L-ornithine</text>
        <dbReference type="Rhea" id="RHEA:15349"/>
        <dbReference type="ChEBI" id="CHEBI:29985"/>
        <dbReference type="ChEBI" id="CHEBI:44337"/>
        <dbReference type="ChEBI" id="CHEBI:46911"/>
        <dbReference type="ChEBI" id="CHEBI:57805"/>
        <dbReference type="EC" id="2.3.1.35"/>
    </reaction>
</comment>
<comment type="catalytic activity">
    <reaction evidence="1">
        <text>L-glutamate + acetyl-CoA = N-acetyl-L-glutamate + CoA + H(+)</text>
        <dbReference type="Rhea" id="RHEA:24292"/>
        <dbReference type="ChEBI" id="CHEBI:15378"/>
        <dbReference type="ChEBI" id="CHEBI:29985"/>
        <dbReference type="ChEBI" id="CHEBI:44337"/>
        <dbReference type="ChEBI" id="CHEBI:57287"/>
        <dbReference type="ChEBI" id="CHEBI:57288"/>
        <dbReference type="EC" id="2.3.1.1"/>
    </reaction>
</comment>
<comment type="pathway">
    <text evidence="1">Amino-acid biosynthesis; L-arginine biosynthesis; L-ornithine and N-acetyl-L-glutamate from L-glutamate and N(2)-acetyl-L-ornithine (cyclic): step 1/1.</text>
</comment>
<comment type="pathway">
    <text evidence="1">Amino-acid biosynthesis; L-arginine biosynthesis; N(2)-acetyl-L-ornithine from L-glutamate: step 1/4.</text>
</comment>
<comment type="subunit">
    <text evidence="1">Heterodimer of an alpha and a beta chain.</text>
</comment>
<comment type="subcellular location">
    <subcellularLocation>
        <location evidence="1">Mitochondrion matrix</location>
    </subcellularLocation>
</comment>
<comment type="PTM">
    <text evidence="1">The alpha and beta chains are autoproteolytically processed from a single precursor protein within the mitochondrion.</text>
</comment>
<comment type="miscellaneous">
    <text evidence="1">This protein may be expected to contain an N-terminal transit peptide but none has been predicted.</text>
</comment>
<comment type="similarity">
    <text evidence="1">Belongs to the ArgJ family.</text>
</comment>
<proteinExistence type="inferred from homology"/>
<evidence type="ECO:0000255" key="1">
    <source>
        <dbReference type="HAMAP-Rule" id="MF_03124"/>
    </source>
</evidence>
<organism>
    <name type="scientific">Paracoccidioides lutzii (strain ATCC MYA-826 / Pb01)</name>
    <name type="common">Paracoccidioides brasiliensis</name>
    <dbReference type="NCBI Taxonomy" id="502779"/>
    <lineage>
        <taxon>Eukaryota</taxon>
        <taxon>Fungi</taxon>
        <taxon>Dikarya</taxon>
        <taxon>Ascomycota</taxon>
        <taxon>Pezizomycotina</taxon>
        <taxon>Eurotiomycetes</taxon>
        <taxon>Eurotiomycetidae</taxon>
        <taxon>Onygenales</taxon>
        <taxon>Ajellomycetaceae</taxon>
        <taxon>Paracoccidioides</taxon>
    </lineage>
</organism>